<gene>
    <name evidence="1" type="primary">HA</name>
</gene>
<sequence>MNTQILILATSAFFYVRADKICLGHHAVSNGTKVDTLTEKGIEVVNATETVEQTNIPKICSKGKQTVDLGQCGLLGTVIGPPQCDQFLEFSANLIVERREGNDICYPGKFDNEETLRQILRKSGGIKKENMGFTYTGVRTNGETSACRRSRSSFYAEMKWLLSSTDNGIFPQMTKSYKNTKKVPALITWGIHHSGSTTEQTRLYGSGNKLITVWSSKYQQSFVPNPGPRPQINGQSGRIDFHWLMLDPNDTVTFSFNGAFIAPDRASFLRGKSLGIQSDAQLDNNCEGECYHIGGTIISNLPFQNINSRTIGKCPRYVKQKSLMLATGMKNVPEAPAHKQLTHHMRKKRGLFGAIAGFIENGWEGLIDGWYGYKHQNAQGEGTAADYKSTQSAINQITGKLNRLIEKTNQQFELIDNEFNEIEKQIGNVINWTRDSIIEVWSYNAEFLVAVENQHTIDLTDSEMNKLYEKVRRQLRENAEEDGNGCFEIFHQCDNDCMASIRNNTYDHKKYRKEAIQNRIQIDAVKLSSGYKDIILWFSFGASCFLFLAIAMGLVFICIKNGNMRCTICI</sequence>
<organism>
    <name type="scientific">Influenza A virus (strain A/Equine/Cambridge/1/1963 H7N7)</name>
    <dbReference type="NCBI Taxonomy" id="217837"/>
    <lineage>
        <taxon>Viruses</taxon>
        <taxon>Riboviria</taxon>
        <taxon>Orthornavirae</taxon>
        <taxon>Negarnaviricota</taxon>
        <taxon>Polyploviricotina</taxon>
        <taxon>Insthoviricetes</taxon>
        <taxon>Articulavirales</taxon>
        <taxon>Orthomyxoviridae</taxon>
        <taxon>Alphainfluenzavirus</taxon>
        <taxon>Alphainfluenzavirus influenzae</taxon>
        <taxon>Influenza A virus</taxon>
    </lineage>
</organism>
<reference key="1">
    <citation type="journal article" date="1992" name="Virus Res.">
        <title>Sequence analysis of the equine H7 influenza virus haemagglutinin gene.</title>
        <authorList>
            <person name="Gibson C.A."/>
            <person name="Daniels R.S."/>
            <person name="Oxford J.S."/>
            <person name="McCauley J.W."/>
        </authorList>
    </citation>
    <scope>NUCLEOTIDE SEQUENCE [GENOMIC RNA]</scope>
</reference>
<accession>P26094</accession>
<comment type="function">
    <text>Binds to sialic acid-containing receptors on the cell surface, bringing about the attachment of the virus particle to the cell. This attachment induces virion internalization of about two third of the virus particles through clathrin-dependent endocytosis and about one third through a clathrin- and caveolin-independent pathway. Plays a major role in the determination of host range restriction and virulence. Class I viral fusion protein. Responsible for penetration of the virus into the cell cytoplasm by mediating the fusion of the membrane of the endocytosed virus particle with the endosomal membrane. Low pH in endosomes induces an irreversible conformational change in HA2, releasing the fusion hydrophobic peptide. Several trimers are required to form a competent fusion pore.</text>
</comment>
<comment type="function">
    <text evidence="1">Binds to sialic acid-containing receptors on the cell surface, bringing about the attachment of the virus particle to the cell. This attachment induces virion internalization either through clathrin-dependent endocytosis or through clathrin- and caveolin-independent pathway. Plays a major role in the determination of host range restriction and virulence. Class I viral fusion protein. Responsible for penetration of the virus into the cell cytoplasm by mediating the fusion of the membrane of the endocytosed virus particle with the endosomal membrane. Low pH in endosomes induces an irreversible conformational change in HA2, releasing the fusion hydrophobic peptide. Several trimers are required to form a competent fusion pore.</text>
</comment>
<comment type="subunit">
    <text evidence="1">Homotrimer of disulfide-linked HA1-HA2.</text>
</comment>
<comment type="subcellular location">
    <subcellularLocation>
        <location evidence="1">Virion membrane</location>
        <topology evidence="1">Single-pass type I membrane protein</topology>
    </subcellularLocation>
    <subcellularLocation>
        <location evidence="1">Host apical cell membrane</location>
        <topology evidence="1">Single-pass type I membrane protein</topology>
    </subcellularLocation>
    <text evidence="1">Targeted to the apical plasma membrane in epithelial polarized cells through a signal present in the transmembrane domain. Associated with glycosphingolipid- and cholesterol-enriched detergent-resistant lipid rafts.</text>
</comment>
<comment type="PTM">
    <text evidence="1">Palmitoylated.</text>
</comment>
<comment type="PTM">
    <text evidence="1">In natural infection, inactive HA is matured into HA1 and HA2 outside the cell by one or more trypsin-like, arginine-specific endoprotease secreted by the bronchial epithelial cells. One identified protease that may be involved in this process is secreted in lungs by club cells.</text>
</comment>
<comment type="miscellaneous">
    <text>Major glycoprotein, comprises over 80% of the envelope proteins present in virus particle.</text>
</comment>
<comment type="miscellaneous">
    <text>The extent of infection into host organism is determined by HA. Influenza viruses bud from the apical surface of polarized epithelial cells (e.g. bronchial epithelial cells) into lumen of lungs and are therefore usually pneumotropic. The reason is that HA is cleaved by tryptase clara which is restricted to lungs. However, HAs of H5 and H7 pantropic avian viruses subtypes can be cleaved by furin and subtilisin-type enzymes, allowing the virus to grow in other organs than lungs.</text>
</comment>
<comment type="miscellaneous">
    <text evidence="2">The influenza A genome consist of 8 RNA segments. Genetic variation of hemagglutinin and/or neuraminidase genes results in the emergence of new influenza strains. The mechanism of variation can be the result of point mutations or the result of genetic reassortment between segments of two different strains.</text>
</comment>
<comment type="similarity">
    <text evidence="1">Belongs to the influenza viruses hemagglutinin family.</text>
</comment>
<name>HEMA_I63A0</name>
<keyword id="KW-1167">Clathrin- and caveolin-independent endocytosis of virus by host</keyword>
<keyword id="KW-1165">Clathrin-mediated endocytosis of virus by host</keyword>
<keyword id="KW-1015">Disulfide bond</keyword>
<keyword id="KW-1170">Fusion of virus membrane with host endosomal membrane</keyword>
<keyword id="KW-1168">Fusion of virus membrane with host membrane</keyword>
<keyword id="KW-0325">Glycoprotein</keyword>
<keyword id="KW-0348">Hemagglutinin</keyword>
<keyword id="KW-1032">Host cell membrane</keyword>
<keyword id="KW-1043">Host membrane</keyword>
<keyword id="KW-0945">Host-virus interaction</keyword>
<keyword id="KW-0449">Lipoprotein</keyword>
<keyword id="KW-0472">Membrane</keyword>
<keyword id="KW-0564">Palmitate</keyword>
<keyword id="KW-0732">Signal</keyword>
<keyword id="KW-0812">Transmembrane</keyword>
<keyword id="KW-1133">Transmembrane helix</keyword>
<keyword id="KW-1161">Viral attachment to host cell</keyword>
<keyword id="KW-0261">Viral envelope protein</keyword>
<keyword id="KW-1162">Viral penetration into host cytoplasm</keyword>
<keyword id="KW-0946">Virion</keyword>
<keyword id="KW-1164">Virus endocytosis by host</keyword>
<keyword id="KW-1160">Virus entry into host cell</keyword>
<proteinExistence type="inferred from homology"/>
<protein>
    <recommendedName>
        <fullName evidence="1">Hemagglutinin</fullName>
    </recommendedName>
    <component>
        <recommendedName>
            <fullName evidence="1">Hemagglutinin HA1 chain</fullName>
        </recommendedName>
    </component>
    <component>
        <recommendedName>
            <fullName evidence="1">Hemagglutinin HA2 chain</fullName>
        </recommendedName>
    </component>
</protein>
<dbReference type="EMBL" id="X62553">
    <property type="protein sequence ID" value="CAA44430.1"/>
    <property type="molecule type" value="Genomic_RNA"/>
</dbReference>
<dbReference type="PIR" id="S22013">
    <property type="entry name" value="S22013"/>
</dbReference>
<dbReference type="SMR" id="P26094"/>
<dbReference type="GlyCosmos" id="P26094">
    <property type="glycosylation" value="5 sites, No reported glycans"/>
</dbReference>
<dbReference type="GO" id="GO:0020002">
    <property type="term" value="C:host cell plasma membrane"/>
    <property type="evidence" value="ECO:0007669"/>
    <property type="project" value="UniProtKB-SubCell"/>
</dbReference>
<dbReference type="GO" id="GO:0016020">
    <property type="term" value="C:membrane"/>
    <property type="evidence" value="ECO:0007669"/>
    <property type="project" value="UniProtKB-UniRule"/>
</dbReference>
<dbReference type="GO" id="GO:0019031">
    <property type="term" value="C:viral envelope"/>
    <property type="evidence" value="ECO:0007669"/>
    <property type="project" value="UniProtKB-UniRule"/>
</dbReference>
<dbReference type="GO" id="GO:0055036">
    <property type="term" value="C:virion membrane"/>
    <property type="evidence" value="ECO:0007669"/>
    <property type="project" value="UniProtKB-SubCell"/>
</dbReference>
<dbReference type="GO" id="GO:0046789">
    <property type="term" value="F:host cell surface receptor binding"/>
    <property type="evidence" value="ECO:0007669"/>
    <property type="project" value="UniProtKB-UniRule"/>
</dbReference>
<dbReference type="GO" id="GO:0075512">
    <property type="term" value="P:clathrin-dependent endocytosis of virus by host cell"/>
    <property type="evidence" value="ECO:0007669"/>
    <property type="project" value="UniProtKB-UniRule"/>
</dbReference>
<dbReference type="GO" id="GO:0039654">
    <property type="term" value="P:fusion of virus membrane with host endosome membrane"/>
    <property type="evidence" value="ECO:0007669"/>
    <property type="project" value="UniProtKB-UniRule"/>
</dbReference>
<dbReference type="GO" id="GO:0019064">
    <property type="term" value="P:fusion of virus membrane with host plasma membrane"/>
    <property type="evidence" value="ECO:0007669"/>
    <property type="project" value="InterPro"/>
</dbReference>
<dbReference type="GO" id="GO:0046761">
    <property type="term" value="P:viral budding from plasma membrane"/>
    <property type="evidence" value="ECO:0007669"/>
    <property type="project" value="UniProtKB-UniRule"/>
</dbReference>
<dbReference type="GO" id="GO:0019062">
    <property type="term" value="P:virion attachment to host cell"/>
    <property type="evidence" value="ECO:0007669"/>
    <property type="project" value="UniProtKB-KW"/>
</dbReference>
<dbReference type="Gene3D" id="3.90.20.10">
    <property type="match status" value="1"/>
</dbReference>
<dbReference type="Gene3D" id="3.90.209.20">
    <property type="match status" value="1"/>
</dbReference>
<dbReference type="HAMAP" id="MF_04072">
    <property type="entry name" value="INFV_HEMA"/>
    <property type="match status" value="1"/>
</dbReference>
<dbReference type="InterPro" id="IPR008980">
    <property type="entry name" value="Capsid_hemagglutn"/>
</dbReference>
<dbReference type="InterPro" id="IPR013828">
    <property type="entry name" value="Hemagglutn_HA1_a/b_dom_sf"/>
</dbReference>
<dbReference type="InterPro" id="IPR000149">
    <property type="entry name" value="Hemagglutn_influenz_A"/>
</dbReference>
<dbReference type="InterPro" id="IPR001364">
    <property type="entry name" value="Hemagglutn_influenz_A/B"/>
</dbReference>
<dbReference type="Pfam" id="PF00509">
    <property type="entry name" value="Hemagglutinin"/>
    <property type="match status" value="1"/>
</dbReference>
<dbReference type="PRINTS" id="PR00330">
    <property type="entry name" value="HEMAGGLUTN1"/>
</dbReference>
<dbReference type="PRINTS" id="PR00329">
    <property type="entry name" value="HEMAGGLUTN12"/>
</dbReference>
<dbReference type="SUPFAM" id="SSF58064">
    <property type="entry name" value="Influenza hemagglutinin (stalk)"/>
    <property type="match status" value="1"/>
</dbReference>
<dbReference type="SUPFAM" id="SSF49818">
    <property type="entry name" value="Viral protein domain"/>
    <property type="match status" value="1"/>
</dbReference>
<feature type="signal peptide" evidence="1">
    <location>
        <begin position="1"/>
        <end position="18"/>
    </location>
</feature>
<feature type="chain" id="PRO_0000440398" description="Hemagglutinin" evidence="1">
    <location>
        <begin position="19"/>
        <end position="570"/>
    </location>
</feature>
<feature type="chain" id="PRO_0000038968" description="Hemagglutinin HA1 chain" evidence="1">
    <location>
        <begin position="19"/>
        <end position="348"/>
    </location>
</feature>
<feature type="chain" id="PRO_0000038969" description="Hemagglutinin HA2 chain" evidence="1">
    <location>
        <begin position="350"/>
        <end position="570"/>
    </location>
</feature>
<feature type="topological domain" description="Extracellular" evidence="1">
    <location>
        <begin position="19"/>
        <end position="533"/>
    </location>
</feature>
<feature type="transmembrane region" description="Helical" evidence="1">
    <location>
        <begin position="534"/>
        <end position="554"/>
    </location>
</feature>
<feature type="topological domain" description="Cytoplasmic" evidence="1">
    <location>
        <begin position="555"/>
        <end position="570"/>
    </location>
</feature>
<feature type="site" description="Cleavage; by host" evidence="1">
    <location>
        <begin position="349"/>
        <end position="350"/>
    </location>
</feature>
<feature type="lipid moiety-binding region" description="S-palmitoyl cysteine; by host" evidence="1">
    <location>
        <position position="566"/>
    </location>
</feature>
<feature type="lipid moiety-binding region" description="S-palmitoyl cysteine; by host" evidence="1">
    <location>
        <position position="569"/>
    </location>
</feature>
<feature type="glycosylation site" description="N-linked (GlcNAc...) asparagine; by host" evidence="1">
    <location>
        <position position="30"/>
    </location>
</feature>
<feature type="glycosylation site" description="N-linked (GlcNAc...) asparagine; by host" evidence="1">
    <location>
        <position position="46"/>
    </location>
</feature>
<feature type="glycosylation site" description="N-linked (GlcNAc...) asparagine; by host" evidence="1">
    <location>
        <position position="249"/>
    </location>
</feature>
<feature type="glycosylation site" description="N-linked (GlcNAc...) asparagine; by host" evidence="1">
    <location>
        <position position="431"/>
    </location>
</feature>
<feature type="glycosylation site" description="N-linked (GlcNAc...) asparagine; by host" evidence="1">
    <location>
        <position position="503"/>
    </location>
</feature>
<feature type="disulfide bond" description="Interchain (between HA1 and HA2 chains)" evidence="1">
    <location>
        <begin position="22"/>
        <end position="486"/>
    </location>
</feature>
<feature type="disulfide bond" evidence="1">
    <location>
        <begin position="60"/>
        <end position="286"/>
    </location>
</feature>
<feature type="disulfide bond" evidence="1">
    <location>
        <begin position="72"/>
        <end position="84"/>
    </location>
</feature>
<feature type="disulfide bond" evidence="1">
    <location>
        <begin position="105"/>
        <end position="147"/>
    </location>
</feature>
<feature type="disulfide bond" evidence="1">
    <location>
        <begin position="290"/>
        <end position="314"/>
    </location>
</feature>
<feature type="disulfide bond" evidence="1">
    <location>
        <begin position="493"/>
        <end position="497"/>
    </location>
</feature>
<organismHost>
    <name type="scientific">Aves</name>
    <dbReference type="NCBI Taxonomy" id="8782"/>
</organismHost>
<organismHost>
    <name type="scientific">Equus caballus</name>
    <name type="common">Horse</name>
    <dbReference type="NCBI Taxonomy" id="9796"/>
</organismHost>
<organismHost>
    <name type="scientific">Homo sapiens</name>
    <name type="common">Human</name>
    <dbReference type="NCBI Taxonomy" id="9606"/>
</organismHost>
<organismHost>
    <name type="scientific">Phocidae</name>
    <name type="common">true seals</name>
    <dbReference type="NCBI Taxonomy" id="9709"/>
</organismHost>
<evidence type="ECO:0000255" key="1">
    <source>
        <dbReference type="HAMAP-Rule" id="MF_04072"/>
    </source>
</evidence>
<evidence type="ECO:0000305" key="2"/>